<dbReference type="EC" id="2.7.8.7" evidence="1"/>
<dbReference type="EMBL" id="CP000390">
    <property type="protein sequence ID" value="ABG62345.1"/>
    <property type="molecule type" value="Genomic_DNA"/>
</dbReference>
<dbReference type="SMR" id="Q11JT0"/>
<dbReference type="STRING" id="266779.Meso_0948"/>
<dbReference type="KEGG" id="mes:Meso_0948"/>
<dbReference type="eggNOG" id="COG0736">
    <property type="taxonomic scope" value="Bacteria"/>
</dbReference>
<dbReference type="HOGENOM" id="CLU_089696_0_2_5"/>
<dbReference type="OrthoDB" id="517356at2"/>
<dbReference type="GO" id="GO:0005737">
    <property type="term" value="C:cytoplasm"/>
    <property type="evidence" value="ECO:0007669"/>
    <property type="project" value="UniProtKB-SubCell"/>
</dbReference>
<dbReference type="GO" id="GO:0008897">
    <property type="term" value="F:holo-[acyl-carrier-protein] synthase activity"/>
    <property type="evidence" value="ECO:0007669"/>
    <property type="project" value="UniProtKB-UniRule"/>
</dbReference>
<dbReference type="GO" id="GO:0000287">
    <property type="term" value="F:magnesium ion binding"/>
    <property type="evidence" value="ECO:0007669"/>
    <property type="project" value="UniProtKB-UniRule"/>
</dbReference>
<dbReference type="GO" id="GO:0006633">
    <property type="term" value="P:fatty acid biosynthetic process"/>
    <property type="evidence" value="ECO:0007669"/>
    <property type="project" value="UniProtKB-UniRule"/>
</dbReference>
<dbReference type="Gene3D" id="3.90.470.20">
    <property type="entry name" value="4'-phosphopantetheinyl transferase domain"/>
    <property type="match status" value="1"/>
</dbReference>
<dbReference type="HAMAP" id="MF_00101">
    <property type="entry name" value="AcpS"/>
    <property type="match status" value="1"/>
</dbReference>
<dbReference type="InterPro" id="IPR008278">
    <property type="entry name" value="4-PPantetheinyl_Trfase_dom"/>
</dbReference>
<dbReference type="InterPro" id="IPR037143">
    <property type="entry name" value="4-PPantetheinyl_Trfase_dom_sf"/>
</dbReference>
<dbReference type="InterPro" id="IPR002582">
    <property type="entry name" value="ACPS"/>
</dbReference>
<dbReference type="InterPro" id="IPR004568">
    <property type="entry name" value="Ppantetheine-prot_Trfase_dom"/>
</dbReference>
<dbReference type="NCBIfam" id="TIGR00516">
    <property type="entry name" value="acpS"/>
    <property type="match status" value="1"/>
</dbReference>
<dbReference type="NCBIfam" id="TIGR00556">
    <property type="entry name" value="pantethn_trn"/>
    <property type="match status" value="1"/>
</dbReference>
<dbReference type="Pfam" id="PF01648">
    <property type="entry name" value="ACPS"/>
    <property type="match status" value="1"/>
</dbReference>
<dbReference type="SUPFAM" id="SSF56214">
    <property type="entry name" value="4'-phosphopantetheinyl transferase"/>
    <property type="match status" value="1"/>
</dbReference>
<gene>
    <name evidence="1" type="primary">acpS</name>
    <name type="ordered locus">Meso_0948</name>
</gene>
<accession>Q11JT0</accession>
<proteinExistence type="inferred from homology"/>
<protein>
    <recommendedName>
        <fullName evidence="1">Holo-[acyl-carrier-protein] synthase</fullName>
        <shortName evidence="1">Holo-ACP synthase</shortName>
        <ecNumber evidence="1">2.7.8.7</ecNumber>
    </recommendedName>
    <alternativeName>
        <fullName evidence="1">4'-phosphopantetheinyl transferase AcpS</fullName>
    </alternativeName>
</protein>
<sequence length="133" mass="14645">MIVGIGSDLIDIRRVEKALERHGERFTHRVFTEVERVKSDRRRMRAASYAKRFAAKEACAKALGTGLAQGVFWRDMGVVNLPGGKPTMHLTGGAAERLNALIPAGHRPLIHLTITDDFPLAQAFVIIEAVSVE</sequence>
<comment type="function">
    <text evidence="1">Transfers the 4'-phosphopantetheine moiety from coenzyme A to a Ser of acyl-carrier-protein.</text>
</comment>
<comment type="catalytic activity">
    <reaction evidence="1">
        <text>apo-[ACP] + CoA = holo-[ACP] + adenosine 3',5'-bisphosphate + H(+)</text>
        <dbReference type="Rhea" id="RHEA:12068"/>
        <dbReference type="Rhea" id="RHEA-COMP:9685"/>
        <dbReference type="Rhea" id="RHEA-COMP:9690"/>
        <dbReference type="ChEBI" id="CHEBI:15378"/>
        <dbReference type="ChEBI" id="CHEBI:29999"/>
        <dbReference type="ChEBI" id="CHEBI:57287"/>
        <dbReference type="ChEBI" id="CHEBI:58343"/>
        <dbReference type="ChEBI" id="CHEBI:64479"/>
        <dbReference type="EC" id="2.7.8.7"/>
    </reaction>
</comment>
<comment type="cofactor">
    <cofactor evidence="1">
        <name>Mg(2+)</name>
        <dbReference type="ChEBI" id="CHEBI:18420"/>
    </cofactor>
</comment>
<comment type="subcellular location">
    <subcellularLocation>
        <location evidence="1">Cytoplasm</location>
    </subcellularLocation>
</comment>
<comment type="similarity">
    <text evidence="1">Belongs to the P-Pant transferase superfamily. AcpS family.</text>
</comment>
<keyword id="KW-0963">Cytoplasm</keyword>
<keyword id="KW-0275">Fatty acid biosynthesis</keyword>
<keyword id="KW-0276">Fatty acid metabolism</keyword>
<keyword id="KW-0444">Lipid biosynthesis</keyword>
<keyword id="KW-0443">Lipid metabolism</keyword>
<keyword id="KW-0460">Magnesium</keyword>
<keyword id="KW-0479">Metal-binding</keyword>
<keyword id="KW-0808">Transferase</keyword>
<evidence type="ECO:0000255" key="1">
    <source>
        <dbReference type="HAMAP-Rule" id="MF_00101"/>
    </source>
</evidence>
<feature type="chain" id="PRO_1000008450" description="Holo-[acyl-carrier-protein] synthase">
    <location>
        <begin position="1"/>
        <end position="133"/>
    </location>
</feature>
<feature type="binding site" evidence="1">
    <location>
        <position position="8"/>
    </location>
    <ligand>
        <name>Mg(2+)</name>
        <dbReference type="ChEBI" id="CHEBI:18420"/>
    </ligand>
</feature>
<feature type="binding site" evidence="1">
    <location>
        <position position="57"/>
    </location>
    <ligand>
        <name>Mg(2+)</name>
        <dbReference type="ChEBI" id="CHEBI:18420"/>
    </ligand>
</feature>
<reference key="1">
    <citation type="submission" date="2006-06" db="EMBL/GenBank/DDBJ databases">
        <title>Complete sequence of chromosome of Mesorhizobium sp. BNC1.</title>
        <authorList>
            <consortium name="US DOE Joint Genome Institute"/>
            <person name="Copeland A."/>
            <person name="Lucas S."/>
            <person name="Lapidus A."/>
            <person name="Barry K."/>
            <person name="Detter J.C."/>
            <person name="Glavina del Rio T."/>
            <person name="Hammon N."/>
            <person name="Israni S."/>
            <person name="Dalin E."/>
            <person name="Tice H."/>
            <person name="Pitluck S."/>
            <person name="Chertkov O."/>
            <person name="Brettin T."/>
            <person name="Bruce D."/>
            <person name="Han C."/>
            <person name="Tapia R."/>
            <person name="Gilna P."/>
            <person name="Schmutz J."/>
            <person name="Larimer F."/>
            <person name="Land M."/>
            <person name="Hauser L."/>
            <person name="Kyrpides N."/>
            <person name="Mikhailova N."/>
            <person name="Richardson P."/>
        </authorList>
    </citation>
    <scope>NUCLEOTIDE SEQUENCE [LARGE SCALE GENOMIC DNA]</scope>
    <source>
        <strain>BNC1</strain>
    </source>
</reference>
<name>ACPS_CHESB</name>
<organism>
    <name type="scientific">Chelativorans sp. (strain BNC1)</name>
    <dbReference type="NCBI Taxonomy" id="266779"/>
    <lineage>
        <taxon>Bacteria</taxon>
        <taxon>Pseudomonadati</taxon>
        <taxon>Pseudomonadota</taxon>
        <taxon>Alphaproteobacteria</taxon>
        <taxon>Hyphomicrobiales</taxon>
        <taxon>Phyllobacteriaceae</taxon>
        <taxon>Chelativorans</taxon>
    </lineage>
</organism>